<comment type="function">
    <text evidence="1">Na(+)/H(+) antiporter that extrudes sodium in exchange for external protons.</text>
</comment>
<comment type="catalytic activity">
    <reaction evidence="1">
        <text>2 Na(+)(in) + 3 H(+)(out) = 2 Na(+)(out) + 3 H(+)(in)</text>
        <dbReference type="Rhea" id="RHEA:29247"/>
        <dbReference type="ChEBI" id="CHEBI:15378"/>
        <dbReference type="ChEBI" id="CHEBI:29101"/>
    </reaction>
    <physiologicalReaction direction="left-to-right" evidence="1">
        <dbReference type="Rhea" id="RHEA:29248"/>
    </physiologicalReaction>
</comment>
<comment type="subcellular location">
    <subcellularLocation>
        <location evidence="1">Cell inner membrane</location>
        <topology evidence="1">Multi-pass membrane protein</topology>
    </subcellularLocation>
</comment>
<comment type="similarity">
    <text evidence="1">Belongs to the NhaB Na(+)/H(+) (TC 2.A.34) antiporter family.</text>
</comment>
<accession>Q88FQ6</accession>
<sequence>MSRPLTGALAHGFLGKSPIWYKVVICLFLVLNPLLLVTIGPVATGWALVLEFIFTLAMALKCYPLMPGGLLLIEALLLQMTTPQALYEELQHNFPVILLLMFMVAGIHFMKELLLFLFSRILLGVRSKAILALLFCVLSAFLSAFLDALTVTAVIISAAVGFYAVYHRVASGANPREDSALESDQQVAHLHREDLDQFRAFLRSLLMHGAVGTALGGVCTLVGEPQNLLIGHEMGWHFVDFFLKVAPVSLPVLGAGLVTCVLLEKVRLFGYGTLMPEPVRRVLTAYAAEDDAARTQAQRIALWVQGLAALILIICLGLHVAEVGLIGLMVIVLITAFTGITDEHRLGRAFQDAMPFTSLLVVFFAVVAVIHQQQLFSPLINWVLALPAEQQPGMLYLANGLLSAISDNVFVATIYITEVKQAFLDGSMSREHFETLAVAINTGTNLPSVATPNGQAAFLFLLTSAIAPLIRLSYGRMVWMALPYTVVMGGLGWWAVTYWL</sequence>
<gene>
    <name evidence="1" type="primary">nhaB</name>
    <name type="ordered locus">PP_4031</name>
</gene>
<dbReference type="EMBL" id="AE015451">
    <property type="protein sequence ID" value="AAN69623.1"/>
    <property type="molecule type" value="Genomic_DNA"/>
</dbReference>
<dbReference type="RefSeq" id="NP_746159.1">
    <property type="nucleotide sequence ID" value="NC_002947.4"/>
</dbReference>
<dbReference type="RefSeq" id="WP_010954829.1">
    <property type="nucleotide sequence ID" value="NZ_CP169744.1"/>
</dbReference>
<dbReference type="SMR" id="Q88FQ6"/>
<dbReference type="STRING" id="160488.PP_4031"/>
<dbReference type="PaxDb" id="160488-PP_4031"/>
<dbReference type="GeneID" id="83679270"/>
<dbReference type="KEGG" id="ppu:PP_4031"/>
<dbReference type="PATRIC" id="fig|160488.4.peg.4284"/>
<dbReference type="eggNOG" id="COG3067">
    <property type="taxonomic scope" value="Bacteria"/>
</dbReference>
<dbReference type="HOGENOM" id="CLU_041110_0_0_6"/>
<dbReference type="OrthoDB" id="5288732at2"/>
<dbReference type="PhylomeDB" id="Q88FQ6"/>
<dbReference type="BioCyc" id="PPUT160488:G1G01-4296-MONOMER"/>
<dbReference type="Proteomes" id="UP000000556">
    <property type="component" value="Chromosome"/>
</dbReference>
<dbReference type="GO" id="GO:0005886">
    <property type="term" value="C:plasma membrane"/>
    <property type="evidence" value="ECO:0007669"/>
    <property type="project" value="UniProtKB-SubCell"/>
</dbReference>
<dbReference type="GO" id="GO:0015385">
    <property type="term" value="F:sodium:proton antiporter activity"/>
    <property type="evidence" value="ECO:0007669"/>
    <property type="project" value="InterPro"/>
</dbReference>
<dbReference type="HAMAP" id="MF_01599">
    <property type="entry name" value="NhaB"/>
    <property type="match status" value="1"/>
</dbReference>
<dbReference type="InterPro" id="IPR004671">
    <property type="entry name" value="Na+/H+_antiporter_NhaB"/>
</dbReference>
<dbReference type="NCBIfam" id="NF007093">
    <property type="entry name" value="PRK09547.1"/>
    <property type="match status" value="1"/>
</dbReference>
<dbReference type="PANTHER" id="PTHR43302:SF1">
    <property type="entry name" value="NA(+)_H(+) ANTIPORTER NHAB"/>
    <property type="match status" value="1"/>
</dbReference>
<dbReference type="PANTHER" id="PTHR43302">
    <property type="entry name" value="TRANSPORTER ARSB-RELATED"/>
    <property type="match status" value="1"/>
</dbReference>
<dbReference type="Pfam" id="PF06450">
    <property type="entry name" value="NhaB"/>
    <property type="match status" value="1"/>
</dbReference>
<proteinExistence type="inferred from homology"/>
<name>NHAB_PSEPK</name>
<keyword id="KW-0050">Antiport</keyword>
<keyword id="KW-0997">Cell inner membrane</keyword>
<keyword id="KW-1003">Cell membrane</keyword>
<keyword id="KW-0406">Ion transport</keyword>
<keyword id="KW-0472">Membrane</keyword>
<keyword id="KW-1185">Reference proteome</keyword>
<keyword id="KW-0915">Sodium</keyword>
<keyword id="KW-0739">Sodium transport</keyword>
<keyword id="KW-0812">Transmembrane</keyword>
<keyword id="KW-1133">Transmembrane helix</keyword>
<keyword id="KW-0813">Transport</keyword>
<feature type="chain" id="PRO_0000333114" description="Na(+)/H(+) antiporter NhaB">
    <location>
        <begin position="1"/>
        <end position="500"/>
    </location>
</feature>
<feature type="transmembrane region" description="Helical" evidence="1">
    <location>
        <begin position="23"/>
        <end position="43"/>
    </location>
</feature>
<feature type="transmembrane region" description="Helical" evidence="1">
    <location>
        <begin position="53"/>
        <end position="73"/>
    </location>
</feature>
<feature type="transmembrane region" description="Helical" evidence="1">
    <location>
        <begin position="96"/>
        <end position="116"/>
    </location>
</feature>
<feature type="transmembrane region" description="Helical" evidence="1">
    <location>
        <begin position="129"/>
        <end position="149"/>
    </location>
</feature>
<feature type="transmembrane region" description="Helical" evidence="1">
    <location>
        <begin position="150"/>
        <end position="170"/>
    </location>
</feature>
<feature type="transmembrane region" description="Helical" evidence="1">
    <location>
        <begin position="205"/>
        <end position="225"/>
    </location>
</feature>
<feature type="transmembrane region" description="Helical" evidence="1">
    <location>
        <begin position="238"/>
        <end position="258"/>
    </location>
</feature>
<feature type="transmembrane region" description="Helical" evidence="1">
    <location>
        <begin position="311"/>
        <end position="331"/>
    </location>
</feature>
<feature type="transmembrane region" description="Helical" evidence="1">
    <location>
        <begin position="350"/>
        <end position="370"/>
    </location>
</feature>
<feature type="transmembrane region" description="Helical" evidence="1">
    <location>
        <begin position="450"/>
        <end position="470"/>
    </location>
</feature>
<feature type="transmembrane region" description="Helical" evidence="1">
    <location>
        <begin position="477"/>
        <end position="497"/>
    </location>
</feature>
<protein>
    <recommendedName>
        <fullName evidence="1">Na(+)/H(+) antiporter NhaB</fullName>
    </recommendedName>
    <alternativeName>
        <fullName evidence="1">Sodium/proton antiporter NhaB</fullName>
    </alternativeName>
</protein>
<reference key="1">
    <citation type="journal article" date="2002" name="Environ. Microbiol.">
        <title>Complete genome sequence and comparative analysis of the metabolically versatile Pseudomonas putida KT2440.</title>
        <authorList>
            <person name="Nelson K.E."/>
            <person name="Weinel C."/>
            <person name="Paulsen I.T."/>
            <person name="Dodson R.J."/>
            <person name="Hilbert H."/>
            <person name="Martins dos Santos V.A.P."/>
            <person name="Fouts D.E."/>
            <person name="Gill S.R."/>
            <person name="Pop M."/>
            <person name="Holmes M."/>
            <person name="Brinkac L.M."/>
            <person name="Beanan M.J."/>
            <person name="DeBoy R.T."/>
            <person name="Daugherty S.C."/>
            <person name="Kolonay J.F."/>
            <person name="Madupu R."/>
            <person name="Nelson W.C."/>
            <person name="White O."/>
            <person name="Peterson J.D."/>
            <person name="Khouri H.M."/>
            <person name="Hance I."/>
            <person name="Chris Lee P."/>
            <person name="Holtzapple E.K."/>
            <person name="Scanlan D."/>
            <person name="Tran K."/>
            <person name="Moazzez A."/>
            <person name="Utterback T.R."/>
            <person name="Rizzo M."/>
            <person name="Lee K."/>
            <person name="Kosack D."/>
            <person name="Moestl D."/>
            <person name="Wedler H."/>
            <person name="Lauber J."/>
            <person name="Stjepandic D."/>
            <person name="Hoheisel J."/>
            <person name="Straetz M."/>
            <person name="Heim S."/>
            <person name="Kiewitz C."/>
            <person name="Eisen J.A."/>
            <person name="Timmis K.N."/>
            <person name="Duesterhoeft A."/>
            <person name="Tuemmler B."/>
            <person name="Fraser C.M."/>
        </authorList>
    </citation>
    <scope>NUCLEOTIDE SEQUENCE [LARGE SCALE GENOMIC DNA]</scope>
    <source>
        <strain>ATCC 47054 / DSM 6125 / CFBP 8728 / NCIMB 11950 / KT2440</strain>
    </source>
</reference>
<evidence type="ECO:0000255" key="1">
    <source>
        <dbReference type="HAMAP-Rule" id="MF_01599"/>
    </source>
</evidence>
<organism>
    <name type="scientific">Pseudomonas putida (strain ATCC 47054 / DSM 6125 / CFBP 8728 / NCIMB 11950 / KT2440)</name>
    <dbReference type="NCBI Taxonomy" id="160488"/>
    <lineage>
        <taxon>Bacteria</taxon>
        <taxon>Pseudomonadati</taxon>
        <taxon>Pseudomonadota</taxon>
        <taxon>Gammaproteobacteria</taxon>
        <taxon>Pseudomonadales</taxon>
        <taxon>Pseudomonadaceae</taxon>
        <taxon>Pseudomonas</taxon>
    </lineage>
</organism>